<gene>
    <name evidence="1" type="primary">rpmC</name>
    <name type="ordered locus">APL_1768</name>
</gene>
<name>RL29_ACTP2</name>
<evidence type="ECO:0000255" key="1">
    <source>
        <dbReference type="HAMAP-Rule" id="MF_00374"/>
    </source>
</evidence>
<evidence type="ECO:0000305" key="2"/>
<sequence length="63" mass="7202">MKAQELRNKNVEELNAELINLLGEQFKLRMQAATGQLQQTHQLKQVRRSIAQVKTVLTEKAGE</sequence>
<proteinExistence type="inferred from homology"/>
<accession>A3N366</accession>
<dbReference type="EMBL" id="CP000569">
    <property type="protein sequence ID" value="ABN74852.1"/>
    <property type="molecule type" value="Genomic_DNA"/>
</dbReference>
<dbReference type="RefSeq" id="WP_005599295.1">
    <property type="nucleotide sequence ID" value="NC_009053.1"/>
</dbReference>
<dbReference type="SMR" id="A3N366"/>
<dbReference type="STRING" id="416269.APL_1768"/>
<dbReference type="EnsemblBacteria" id="ABN74852">
    <property type="protein sequence ID" value="ABN74852"/>
    <property type="gene ID" value="APL_1768"/>
</dbReference>
<dbReference type="GeneID" id="92743647"/>
<dbReference type="KEGG" id="apl:APL_1768"/>
<dbReference type="eggNOG" id="COG0255">
    <property type="taxonomic scope" value="Bacteria"/>
</dbReference>
<dbReference type="HOGENOM" id="CLU_158491_1_2_6"/>
<dbReference type="Proteomes" id="UP000001432">
    <property type="component" value="Chromosome"/>
</dbReference>
<dbReference type="GO" id="GO:0022625">
    <property type="term" value="C:cytosolic large ribosomal subunit"/>
    <property type="evidence" value="ECO:0007669"/>
    <property type="project" value="TreeGrafter"/>
</dbReference>
<dbReference type="GO" id="GO:0003735">
    <property type="term" value="F:structural constituent of ribosome"/>
    <property type="evidence" value="ECO:0007669"/>
    <property type="project" value="InterPro"/>
</dbReference>
<dbReference type="GO" id="GO:0006412">
    <property type="term" value="P:translation"/>
    <property type="evidence" value="ECO:0007669"/>
    <property type="project" value="UniProtKB-UniRule"/>
</dbReference>
<dbReference type="CDD" id="cd00427">
    <property type="entry name" value="Ribosomal_L29_HIP"/>
    <property type="match status" value="1"/>
</dbReference>
<dbReference type="FunFam" id="1.10.287.310:FF:000001">
    <property type="entry name" value="50S ribosomal protein L29"/>
    <property type="match status" value="1"/>
</dbReference>
<dbReference type="Gene3D" id="1.10.287.310">
    <property type="match status" value="1"/>
</dbReference>
<dbReference type="HAMAP" id="MF_00374">
    <property type="entry name" value="Ribosomal_uL29"/>
    <property type="match status" value="1"/>
</dbReference>
<dbReference type="InterPro" id="IPR050063">
    <property type="entry name" value="Ribosomal_protein_uL29"/>
</dbReference>
<dbReference type="InterPro" id="IPR001854">
    <property type="entry name" value="Ribosomal_uL29"/>
</dbReference>
<dbReference type="InterPro" id="IPR018254">
    <property type="entry name" value="Ribosomal_uL29_CS"/>
</dbReference>
<dbReference type="InterPro" id="IPR036049">
    <property type="entry name" value="Ribosomal_uL29_sf"/>
</dbReference>
<dbReference type="NCBIfam" id="TIGR00012">
    <property type="entry name" value="L29"/>
    <property type="match status" value="1"/>
</dbReference>
<dbReference type="PANTHER" id="PTHR10916">
    <property type="entry name" value="60S RIBOSOMAL PROTEIN L35/50S RIBOSOMAL PROTEIN L29"/>
    <property type="match status" value="1"/>
</dbReference>
<dbReference type="PANTHER" id="PTHR10916:SF0">
    <property type="entry name" value="LARGE RIBOSOMAL SUBUNIT PROTEIN UL29C"/>
    <property type="match status" value="1"/>
</dbReference>
<dbReference type="Pfam" id="PF00831">
    <property type="entry name" value="Ribosomal_L29"/>
    <property type="match status" value="1"/>
</dbReference>
<dbReference type="SUPFAM" id="SSF46561">
    <property type="entry name" value="Ribosomal protein L29 (L29p)"/>
    <property type="match status" value="1"/>
</dbReference>
<dbReference type="PROSITE" id="PS00579">
    <property type="entry name" value="RIBOSOMAL_L29"/>
    <property type="match status" value="1"/>
</dbReference>
<comment type="similarity">
    <text evidence="1">Belongs to the universal ribosomal protein uL29 family.</text>
</comment>
<protein>
    <recommendedName>
        <fullName evidence="1">Large ribosomal subunit protein uL29</fullName>
    </recommendedName>
    <alternativeName>
        <fullName evidence="2">50S ribosomal protein L29</fullName>
    </alternativeName>
</protein>
<feature type="chain" id="PRO_1000007411" description="Large ribosomal subunit protein uL29">
    <location>
        <begin position="1"/>
        <end position="63"/>
    </location>
</feature>
<organism>
    <name type="scientific">Actinobacillus pleuropneumoniae serotype 5b (strain L20)</name>
    <dbReference type="NCBI Taxonomy" id="416269"/>
    <lineage>
        <taxon>Bacteria</taxon>
        <taxon>Pseudomonadati</taxon>
        <taxon>Pseudomonadota</taxon>
        <taxon>Gammaproteobacteria</taxon>
        <taxon>Pasteurellales</taxon>
        <taxon>Pasteurellaceae</taxon>
        <taxon>Actinobacillus</taxon>
    </lineage>
</organism>
<reference key="1">
    <citation type="journal article" date="2008" name="J. Bacteriol.">
        <title>The complete genome sequence of Actinobacillus pleuropneumoniae L20 (serotype 5b).</title>
        <authorList>
            <person name="Foote S.J."/>
            <person name="Bosse J.T."/>
            <person name="Bouevitch A.B."/>
            <person name="Langford P.R."/>
            <person name="Young N.M."/>
            <person name="Nash J.H.E."/>
        </authorList>
    </citation>
    <scope>NUCLEOTIDE SEQUENCE [LARGE SCALE GENOMIC DNA]</scope>
    <source>
        <strain>L20</strain>
    </source>
</reference>
<keyword id="KW-1185">Reference proteome</keyword>
<keyword id="KW-0687">Ribonucleoprotein</keyword>
<keyword id="KW-0689">Ribosomal protein</keyword>